<dbReference type="EC" id="5.3.1.13"/>
<dbReference type="EMBL" id="AE005174">
    <property type="protein sequence ID" value="AAG57815.1"/>
    <property type="status" value="ALT_INIT"/>
    <property type="molecule type" value="Genomic_DNA"/>
</dbReference>
<dbReference type="EMBL" id="BA000007">
    <property type="protein sequence ID" value="BAB36987.2"/>
    <property type="molecule type" value="Genomic_DNA"/>
</dbReference>
<dbReference type="PIR" id="C85919">
    <property type="entry name" value="C85919"/>
</dbReference>
<dbReference type="PIR" id="D91074">
    <property type="entry name" value="D91074"/>
</dbReference>
<dbReference type="PIR" id="H65050">
    <property type="entry name" value="H65050"/>
</dbReference>
<dbReference type="RefSeq" id="WP_001287420.1">
    <property type="nucleotide sequence ID" value="NZ_VOAI01000003.1"/>
</dbReference>
<dbReference type="SMR" id="Q8X4S5"/>
<dbReference type="STRING" id="155864.Z4015"/>
<dbReference type="KEGG" id="ece:Z4015"/>
<dbReference type="KEGG" id="ecs:ECs_3564"/>
<dbReference type="PATRIC" id="fig|386585.9.peg.3724"/>
<dbReference type="eggNOG" id="COG0517">
    <property type="taxonomic scope" value="Bacteria"/>
</dbReference>
<dbReference type="eggNOG" id="COG0794">
    <property type="taxonomic scope" value="Bacteria"/>
</dbReference>
<dbReference type="HOGENOM" id="CLU_040681_13_1_6"/>
<dbReference type="OMA" id="VHHLMRT"/>
<dbReference type="Proteomes" id="UP000000558">
    <property type="component" value="Chromosome"/>
</dbReference>
<dbReference type="Proteomes" id="UP000002519">
    <property type="component" value="Chromosome"/>
</dbReference>
<dbReference type="GO" id="GO:0019146">
    <property type="term" value="F:arabinose-5-phosphate isomerase activity"/>
    <property type="evidence" value="ECO:0007669"/>
    <property type="project" value="UniProtKB-EC"/>
</dbReference>
<dbReference type="GO" id="GO:0005524">
    <property type="term" value="F:ATP binding"/>
    <property type="evidence" value="ECO:0007669"/>
    <property type="project" value="UniProtKB-KW"/>
</dbReference>
<dbReference type="GO" id="GO:0046872">
    <property type="term" value="F:metal ion binding"/>
    <property type="evidence" value="ECO:0007669"/>
    <property type="project" value="UniProtKB-KW"/>
</dbReference>
<dbReference type="GO" id="GO:0019294">
    <property type="term" value="P:keto-3-deoxy-D-manno-octulosonic acid biosynthetic process"/>
    <property type="evidence" value="ECO:0000250"/>
    <property type="project" value="UniProtKB"/>
</dbReference>
<dbReference type="CDD" id="cd04604">
    <property type="entry name" value="CBS_pair_SIS_assoc"/>
    <property type="match status" value="1"/>
</dbReference>
<dbReference type="CDD" id="cd05014">
    <property type="entry name" value="SIS_Kpsf"/>
    <property type="match status" value="1"/>
</dbReference>
<dbReference type="FunFam" id="3.10.580.10:FF:000013">
    <property type="entry name" value="Arabinose 5-phosphate isomerase"/>
    <property type="match status" value="1"/>
</dbReference>
<dbReference type="FunFam" id="3.40.50.10490:FF:000011">
    <property type="entry name" value="Arabinose 5-phosphate isomerase"/>
    <property type="match status" value="1"/>
</dbReference>
<dbReference type="Gene3D" id="3.10.580.10">
    <property type="entry name" value="CBS-domain"/>
    <property type="match status" value="1"/>
</dbReference>
<dbReference type="Gene3D" id="3.40.50.10490">
    <property type="entry name" value="Glucose-6-phosphate isomerase like protein, domain 1"/>
    <property type="match status" value="1"/>
</dbReference>
<dbReference type="InterPro" id="IPR000644">
    <property type="entry name" value="CBS_dom"/>
</dbReference>
<dbReference type="InterPro" id="IPR046342">
    <property type="entry name" value="CBS_dom_sf"/>
</dbReference>
<dbReference type="InterPro" id="IPR050986">
    <property type="entry name" value="GutQ/KpsF_isomerases"/>
</dbReference>
<dbReference type="InterPro" id="IPR004800">
    <property type="entry name" value="KdsD/KpsF-type"/>
</dbReference>
<dbReference type="InterPro" id="IPR001347">
    <property type="entry name" value="SIS_dom"/>
</dbReference>
<dbReference type="InterPro" id="IPR046348">
    <property type="entry name" value="SIS_dom_sf"/>
</dbReference>
<dbReference type="InterPro" id="IPR035474">
    <property type="entry name" value="SIS_Kpsf"/>
</dbReference>
<dbReference type="NCBIfam" id="TIGR00393">
    <property type="entry name" value="kpsF"/>
    <property type="match status" value="1"/>
</dbReference>
<dbReference type="NCBIfam" id="NF008581">
    <property type="entry name" value="PRK11543.1"/>
    <property type="match status" value="1"/>
</dbReference>
<dbReference type="PANTHER" id="PTHR42745">
    <property type="match status" value="1"/>
</dbReference>
<dbReference type="PANTHER" id="PTHR42745:SF2">
    <property type="entry name" value="ARABINOSE 5-PHOSPHATE ISOMERASE GUTQ"/>
    <property type="match status" value="1"/>
</dbReference>
<dbReference type="Pfam" id="PF00571">
    <property type="entry name" value="CBS"/>
    <property type="match status" value="2"/>
</dbReference>
<dbReference type="Pfam" id="PF01380">
    <property type="entry name" value="SIS"/>
    <property type="match status" value="1"/>
</dbReference>
<dbReference type="PIRSF" id="PIRSF004692">
    <property type="entry name" value="KdsD_KpsF"/>
    <property type="match status" value="1"/>
</dbReference>
<dbReference type="SUPFAM" id="SSF54631">
    <property type="entry name" value="CBS-domain pair"/>
    <property type="match status" value="1"/>
</dbReference>
<dbReference type="SUPFAM" id="SSF53697">
    <property type="entry name" value="SIS domain"/>
    <property type="match status" value="1"/>
</dbReference>
<dbReference type="PROSITE" id="PS51371">
    <property type="entry name" value="CBS"/>
    <property type="match status" value="2"/>
</dbReference>
<dbReference type="PROSITE" id="PS51464">
    <property type="entry name" value="SIS"/>
    <property type="match status" value="1"/>
</dbReference>
<protein>
    <recommendedName>
        <fullName>Arabinose 5-phosphate isomerase GutQ</fullName>
        <shortName>API</shortName>
        <shortName>G-API</shortName>
        <ecNumber>5.3.1.13</ecNumber>
    </recommendedName>
    <alternativeName>
        <fullName>Phosphosugar aldol-ketol isomerase</fullName>
    </alternativeName>
</protein>
<accession>Q8X4S5</accession>
<accession>Q7ABC5</accession>
<proteinExistence type="inferred from homology"/>
<reference key="1">
    <citation type="journal article" date="2001" name="Nature">
        <title>Genome sequence of enterohaemorrhagic Escherichia coli O157:H7.</title>
        <authorList>
            <person name="Perna N.T."/>
            <person name="Plunkett G. III"/>
            <person name="Burland V."/>
            <person name="Mau B."/>
            <person name="Glasner J.D."/>
            <person name="Rose D.J."/>
            <person name="Mayhew G.F."/>
            <person name="Evans P.S."/>
            <person name="Gregor J."/>
            <person name="Kirkpatrick H.A."/>
            <person name="Posfai G."/>
            <person name="Hackett J."/>
            <person name="Klink S."/>
            <person name="Boutin A."/>
            <person name="Shao Y."/>
            <person name="Miller L."/>
            <person name="Grotbeck E.J."/>
            <person name="Davis N.W."/>
            <person name="Lim A."/>
            <person name="Dimalanta E.T."/>
            <person name="Potamousis K."/>
            <person name="Apodaca J."/>
            <person name="Anantharaman T.S."/>
            <person name="Lin J."/>
            <person name="Yen G."/>
            <person name="Schwartz D.C."/>
            <person name="Welch R.A."/>
            <person name="Blattner F.R."/>
        </authorList>
    </citation>
    <scope>NUCLEOTIDE SEQUENCE [LARGE SCALE GENOMIC DNA]</scope>
    <source>
        <strain>O157:H7 / EDL933 / ATCC 700927 / EHEC</strain>
    </source>
</reference>
<reference key="2">
    <citation type="journal article" date="2001" name="DNA Res.">
        <title>Complete genome sequence of enterohemorrhagic Escherichia coli O157:H7 and genomic comparison with a laboratory strain K-12.</title>
        <authorList>
            <person name="Hayashi T."/>
            <person name="Makino K."/>
            <person name="Ohnishi M."/>
            <person name="Kurokawa K."/>
            <person name="Ishii K."/>
            <person name="Yokoyama K."/>
            <person name="Han C.-G."/>
            <person name="Ohtsubo E."/>
            <person name="Nakayama K."/>
            <person name="Murata T."/>
            <person name="Tanaka M."/>
            <person name="Tobe T."/>
            <person name="Iida T."/>
            <person name="Takami H."/>
            <person name="Honda T."/>
            <person name="Sasakawa C."/>
            <person name="Ogasawara N."/>
            <person name="Yasunaga T."/>
            <person name="Kuhara S."/>
            <person name="Shiba T."/>
            <person name="Hattori M."/>
            <person name="Shinagawa H."/>
        </authorList>
    </citation>
    <scope>NUCLEOTIDE SEQUENCE [LARGE SCALE GENOMIC DNA]</scope>
    <source>
        <strain>O157:H7 / Sakai / RIMD 0509952 / EHEC</strain>
    </source>
</reference>
<gene>
    <name type="primary">gutQ</name>
    <name type="ordered locus">Z4015</name>
    <name type="ordered locus">ECs3564</name>
</gene>
<organism>
    <name type="scientific">Escherichia coli O157:H7</name>
    <dbReference type="NCBI Taxonomy" id="83334"/>
    <lineage>
        <taxon>Bacteria</taxon>
        <taxon>Pseudomonadati</taxon>
        <taxon>Pseudomonadota</taxon>
        <taxon>Gammaproteobacteria</taxon>
        <taxon>Enterobacterales</taxon>
        <taxon>Enterobacteriaceae</taxon>
        <taxon>Escherichia</taxon>
    </lineage>
</organism>
<feature type="chain" id="PRO_0000410937" description="Arabinose 5-phosphate isomerase GutQ">
    <location>
        <begin position="1"/>
        <end position="321"/>
    </location>
</feature>
<feature type="domain" description="SIS" evidence="4">
    <location>
        <begin position="34"/>
        <end position="177"/>
    </location>
</feature>
<feature type="domain" description="CBS 1" evidence="3">
    <location>
        <begin position="203"/>
        <end position="261"/>
    </location>
</feature>
<feature type="domain" description="CBS 2" evidence="3">
    <location>
        <begin position="269"/>
        <end position="321"/>
    </location>
</feature>
<feature type="binding site" evidence="2">
    <location>
        <begin position="49"/>
        <end position="54"/>
    </location>
    <ligand>
        <name>ATP</name>
        <dbReference type="ChEBI" id="CHEBI:30616"/>
    </ligand>
</feature>
<feature type="binding site" evidence="1">
    <location>
        <begin position="68"/>
        <end position="69"/>
    </location>
    <ligand>
        <name>substrate</name>
    </ligand>
</feature>
<feature type="binding site" evidence="1">
    <location>
        <position position="75"/>
    </location>
    <ligand>
        <name>substrate</name>
    </ligand>
</feature>
<feature type="binding site" evidence="1">
    <location>
        <position position="75"/>
    </location>
    <ligand>
        <name>Zn(2+)</name>
        <dbReference type="ChEBI" id="CHEBI:29105"/>
    </ligand>
</feature>
<feature type="binding site" evidence="1">
    <location>
        <position position="81"/>
    </location>
    <ligand>
        <name>substrate</name>
    </ligand>
</feature>
<feature type="binding site" evidence="1">
    <location>
        <begin position="107"/>
        <end position="116"/>
    </location>
    <ligand>
        <name>substrate</name>
    </ligand>
</feature>
<feature type="binding site" evidence="1">
    <location>
        <begin position="141"/>
        <end position="143"/>
    </location>
    <ligand>
        <name>substrate</name>
    </ligand>
</feature>
<feature type="binding site" evidence="1">
    <location>
        <position position="215"/>
    </location>
    <ligand>
        <name>substrate</name>
    </ligand>
</feature>
<feature type="binding site" evidence="1">
    <location>
        <position position="267"/>
    </location>
    <ligand>
        <name>substrate</name>
    </ligand>
</feature>
<feature type="site" description="Catalytically relevant" evidence="1">
    <location>
        <position position="52"/>
    </location>
</feature>
<feature type="site" description="Catalytically relevant" evidence="1">
    <location>
        <position position="104"/>
    </location>
</feature>
<feature type="site" description="Catalytically relevant" evidence="1">
    <location>
        <position position="145"/>
    </location>
</feature>
<feature type="site" description="Catalytically relevant" evidence="1">
    <location>
        <position position="186"/>
    </location>
</feature>
<sequence length="321" mass="34031">MSEALLNAGRQTLMLELQEASRLPERLGDDFVRAANIILHCEGKVVVSGIGKSGHIGKKIAATLASTGTPAFFVHPAEALHGDLGMIESRDVMLFISYSGGAKELDLIIPRLEDKSIALLAMTGKPTSPLGLAAKAVLDISVEREACPMHLAPTSSTVNTLMMGDALAMAVMQARGFNEEDFARSHPAGALGARLLNKVHHLMRRDDAIPQVALTASVMDAMLELSRTGLGLVAVCDAQQQVQGVFTDGDLRRWLVGGGALTTPVNEAMTVGGTTLQSQSRAIDAKEILMKRKITAAPVVDENGKLTGAINLQDFYQAGII</sequence>
<keyword id="KW-0067">ATP-binding</keyword>
<keyword id="KW-0129">CBS domain</keyword>
<keyword id="KW-0413">Isomerase</keyword>
<keyword id="KW-0448">Lipopolysaccharide biosynthesis</keyword>
<keyword id="KW-0479">Metal-binding</keyword>
<keyword id="KW-0547">Nucleotide-binding</keyword>
<keyword id="KW-1185">Reference proteome</keyword>
<keyword id="KW-0677">Repeat</keyword>
<keyword id="KW-0862">Zinc</keyword>
<name>GUTQ_ECO57</name>
<evidence type="ECO:0000250" key="1"/>
<evidence type="ECO:0000255" key="2"/>
<evidence type="ECO:0000255" key="3">
    <source>
        <dbReference type="PROSITE-ProRule" id="PRU00703"/>
    </source>
</evidence>
<evidence type="ECO:0000255" key="4">
    <source>
        <dbReference type="PROSITE-ProRule" id="PRU00797"/>
    </source>
</evidence>
<evidence type="ECO:0000305" key="5"/>
<comment type="function">
    <text evidence="1">Catalyzes the reversible aldol-ketol isomerization between D-ribulose 5-phosphate (Ru5P) and D-arabinose 5-phosphate (A5P). It is also able of sustaining the biosynthetic pathway of 3-deoxy-D-manno-octulosonate (KDO), a unique 8-carbon sugar component of lipopolysaccharides (LPSs) (By similarity).</text>
</comment>
<comment type="catalytic activity">
    <reaction>
        <text>D-arabinose 5-phosphate = D-ribulose 5-phosphate</text>
        <dbReference type="Rhea" id="RHEA:23104"/>
        <dbReference type="ChEBI" id="CHEBI:57693"/>
        <dbReference type="ChEBI" id="CHEBI:58121"/>
        <dbReference type="EC" id="5.3.1.13"/>
    </reaction>
</comment>
<comment type="subunit">
    <text evidence="1">Homotetramer.</text>
</comment>
<comment type="similarity">
    <text evidence="5">Belongs to the SIS family. GutQ/KpsF subfamily.</text>
</comment>
<comment type="sequence caution" evidence="5">
    <conflict type="erroneous initiation">
        <sequence resource="EMBL-CDS" id="AAG57815"/>
    </conflict>
    <text>Truncated N-terminus.</text>
</comment>